<feature type="chain" id="PRO_0000303146" description="Probable DNA-directed RNA polymerase subunit delta">
    <location>
        <begin position="1"/>
        <end position="177"/>
    </location>
</feature>
<feature type="domain" description="HTH HARE-type" evidence="2">
    <location>
        <begin position="14"/>
        <end position="83"/>
    </location>
</feature>
<feature type="region of interest" description="Disordered" evidence="3">
    <location>
        <begin position="117"/>
        <end position="164"/>
    </location>
</feature>
<feature type="compositionally biased region" description="Acidic residues" evidence="3">
    <location>
        <begin position="117"/>
        <end position="134"/>
    </location>
</feature>
<feature type="compositionally biased region" description="Acidic residues" evidence="3">
    <location>
        <begin position="142"/>
        <end position="157"/>
    </location>
</feature>
<comment type="function">
    <text evidence="1">Participates in both the initiation and recycling phases of transcription. In the presence of the delta subunit, RNAP displays an increased specificity of transcription, a decreased affinity for nucleic acids, and an increased efficiency of RNA synthesis because of enhanced recycling.</text>
</comment>
<comment type="subunit">
    <text evidence="1">RNAP is composed of a core of 2 alpha, a beta and a beta' subunits. The core is associated with a delta subunit and one of several sigma factors.</text>
</comment>
<comment type="similarity">
    <text evidence="1">Belongs to the RpoE family.</text>
</comment>
<organism>
    <name type="scientific">Streptococcus suis (strain 98HAH33)</name>
    <dbReference type="NCBI Taxonomy" id="391296"/>
    <lineage>
        <taxon>Bacteria</taxon>
        <taxon>Bacillati</taxon>
        <taxon>Bacillota</taxon>
        <taxon>Bacilli</taxon>
        <taxon>Lactobacillales</taxon>
        <taxon>Streptococcaceae</taxon>
        <taxon>Streptococcus</taxon>
    </lineage>
</organism>
<accession>A4VZE7</accession>
<proteinExistence type="inferred from homology"/>
<evidence type="ECO:0000255" key="1">
    <source>
        <dbReference type="HAMAP-Rule" id="MF_00357"/>
    </source>
</evidence>
<evidence type="ECO:0000255" key="2">
    <source>
        <dbReference type="PROSITE-ProRule" id="PRU01261"/>
    </source>
</evidence>
<evidence type="ECO:0000256" key="3">
    <source>
        <dbReference type="SAM" id="MobiDB-lite"/>
    </source>
</evidence>
<gene>
    <name evidence="1" type="primary">rpoE</name>
    <name type="ordered locus">SSU98_0328</name>
</gene>
<sequence>MELNVFAGQEKSELSMIEVARAILEERGRDNEMYFNDLVNEIQNYLEKSNSEIRAALPTFYSDLNVDGSFIPLGENKWGLRSWYAIDEIDEEVITLEEDDEDAPKRKKKRVNAFMDGDDDAIDYGHDDPEDEDNYPGSVSSEYDDENPDDEKDEVESYDQKSTKLSQMTNWMKRMLI</sequence>
<dbReference type="EMBL" id="CP000408">
    <property type="protein sequence ID" value="ABP91486.1"/>
    <property type="molecule type" value="Genomic_DNA"/>
</dbReference>
<dbReference type="SMR" id="A4VZE7"/>
<dbReference type="KEGG" id="ssv:SSU98_0328"/>
<dbReference type="HOGENOM" id="CLU_116648_0_0_9"/>
<dbReference type="GO" id="GO:0000428">
    <property type="term" value="C:DNA-directed RNA polymerase complex"/>
    <property type="evidence" value="ECO:0007669"/>
    <property type="project" value="UniProtKB-KW"/>
</dbReference>
<dbReference type="GO" id="GO:0003899">
    <property type="term" value="F:DNA-directed RNA polymerase activity"/>
    <property type="evidence" value="ECO:0007669"/>
    <property type="project" value="UniProtKB-UniRule"/>
</dbReference>
<dbReference type="GO" id="GO:0006351">
    <property type="term" value="P:DNA-templated transcription"/>
    <property type="evidence" value="ECO:0007669"/>
    <property type="project" value="InterPro"/>
</dbReference>
<dbReference type="GO" id="GO:0006355">
    <property type="term" value="P:regulation of DNA-templated transcription"/>
    <property type="evidence" value="ECO:0007669"/>
    <property type="project" value="UniProtKB-UniRule"/>
</dbReference>
<dbReference type="Gene3D" id="1.10.10.1250">
    <property type="entry name" value="RNA polymerase, subunit delta, N-terminal domain"/>
    <property type="match status" value="1"/>
</dbReference>
<dbReference type="HAMAP" id="MF_00357">
    <property type="entry name" value="RNApol_bact_RpoE"/>
    <property type="match status" value="1"/>
</dbReference>
<dbReference type="InterPro" id="IPR007759">
    <property type="entry name" value="Asxl_HARE-HTH"/>
</dbReference>
<dbReference type="InterPro" id="IPR038087">
    <property type="entry name" value="RNAP_delta_N_dom_sf"/>
</dbReference>
<dbReference type="InterPro" id="IPR029757">
    <property type="entry name" value="RpoE"/>
</dbReference>
<dbReference type="NCBIfam" id="TIGR04567">
    <property type="entry name" value="RNAP_delt_lowGC"/>
    <property type="match status" value="1"/>
</dbReference>
<dbReference type="Pfam" id="PF05066">
    <property type="entry name" value="HARE-HTH"/>
    <property type="match status" value="1"/>
</dbReference>
<dbReference type="PROSITE" id="PS51913">
    <property type="entry name" value="HTH_HARE"/>
    <property type="match status" value="1"/>
</dbReference>
<name>RPOE_STRS2</name>
<reference key="1">
    <citation type="journal article" date="2007" name="PLoS ONE">
        <title>A glimpse of streptococcal toxic shock syndrome from comparative genomics of S. suis 2 Chinese isolates.</title>
        <authorList>
            <person name="Chen C."/>
            <person name="Tang J."/>
            <person name="Dong W."/>
            <person name="Wang C."/>
            <person name="Feng Y."/>
            <person name="Wang J."/>
            <person name="Zheng F."/>
            <person name="Pan X."/>
            <person name="Liu D."/>
            <person name="Li M."/>
            <person name="Song Y."/>
            <person name="Zhu X."/>
            <person name="Sun H."/>
            <person name="Feng T."/>
            <person name="Guo Z."/>
            <person name="Ju A."/>
            <person name="Ge J."/>
            <person name="Dong Y."/>
            <person name="Sun W."/>
            <person name="Jiang Y."/>
            <person name="Wang J."/>
            <person name="Yan J."/>
            <person name="Yang H."/>
            <person name="Wang X."/>
            <person name="Gao G.F."/>
            <person name="Yang R."/>
            <person name="Wang J."/>
            <person name="Yu J."/>
        </authorList>
    </citation>
    <scope>NUCLEOTIDE SEQUENCE [LARGE SCALE GENOMIC DNA]</scope>
    <source>
        <strain>98HAH33</strain>
    </source>
</reference>
<keyword id="KW-0240">DNA-directed RNA polymerase</keyword>
<keyword id="KW-0548">Nucleotidyltransferase</keyword>
<keyword id="KW-0804">Transcription</keyword>
<keyword id="KW-0808">Transferase</keyword>
<protein>
    <recommendedName>
        <fullName evidence="1">Probable DNA-directed RNA polymerase subunit delta</fullName>
    </recommendedName>
    <alternativeName>
        <fullName evidence="1">RNAP delta factor</fullName>
    </alternativeName>
</protein>